<reference key="1">
    <citation type="journal article" date="2004" name="Nucleic Acids Res.">
        <title>Whole genome comparisons of serotype 4b and 1/2a strains of the food-borne pathogen Listeria monocytogenes reveal new insights into the core genome components of this species.</title>
        <authorList>
            <person name="Nelson K.E."/>
            <person name="Fouts D.E."/>
            <person name="Mongodin E.F."/>
            <person name="Ravel J."/>
            <person name="DeBoy R.T."/>
            <person name="Kolonay J.F."/>
            <person name="Rasko D.A."/>
            <person name="Angiuoli S.V."/>
            <person name="Gill S.R."/>
            <person name="Paulsen I.T."/>
            <person name="Peterson J.D."/>
            <person name="White O."/>
            <person name="Nelson W.C."/>
            <person name="Nierman W.C."/>
            <person name="Beanan M.J."/>
            <person name="Brinkac L.M."/>
            <person name="Daugherty S.C."/>
            <person name="Dodson R.J."/>
            <person name="Durkin A.S."/>
            <person name="Madupu R."/>
            <person name="Haft D.H."/>
            <person name="Selengut J."/>
            <person name="Van Aken S.E."/>
            <person name="Khouri H.M."/>
            <person name="Fedorova N."/>
            <person name="Forberger H.A."/>
            <person name="Tran B."/>
            <person name="Kathariou S."/>
            <person name="Wonderling L.D."/>
            <person name="Uhlich G.A."/>
            <person name="Bayles D.O."/>
            <person name="Luchansky J.B."/>
            <person name="Fraser C.M."/>
        </authorList>
    </citation>
    <scope>NUCLEOTIDE SEQUENCE [LARGE SCALE GENOMIC DNA]</scope>
    <source>
        <strain>F2365</strain>
    </source>
</reference>
<name>RL332_LISMF</name>
<dbReference type="EMBL" id="AE017262">
    <property type="protein sequence ID" value="AAT03043.1"/>
    <property type="molecule type" value="Genomic_DNA"/>
</dbReference>
<dbReference type="SMR" id="Q724G8"/>
<dbReference type="KEGG" id="lmf:LMOf2365_0256"/>
<dbReference type="HOGENOM" id="CLU_190949_0_1_9"/>
<dbReference type="GO" id="GO:0005737">
    <property type="term" value="C:cytoplasm"/>
    <property type="evidence" value="ECO:0007669"/>
    <property type="project" value="UniProtKB-ARBA"/>
</dbReference>
<dbReference type="GO" id="GO:1990904">
    <property type="term" value="C:ribonucleoprotein complex"/>
    <property type="evidence" value="ECO:0007669"/>
    <property type="project" value="UniProtKB-KW"/>
</dbReference>
<dbReference type="GO" id="GO:0005840">
    <property type="term" value="C:ribosome"/>
    <property type="evidence" value="ECO:0007669"/>
    <property type="project" value="UniProtKB-KW"/>
</dbReference>
<dbReference type="GO" id="GO:0003735">
    <property type="term" value="F:structural constituent of ribosome"/>
    <property type="evidence" value="ECO:0007669"/>
    <property type="project" value="InterPro"/>
</dbReference>
<dbReference type="GO" id="GO:0006412">
    <property type="term" value="P:translation"/>
    <property type="evidence" value="ECO:0007669"/>
    <property type="project" value="UniProtKB-UniRule"/>
</dbReference>
<dbReference type="Gene3D" id="2.20.28.120">
    <property type="entry name" value="Ribosomal protein L33"/>
    <property type="match status" value="1"/>
</dbReference>
<dbReference type="HAMAP" id="MF_00294">
    <property type="entry name" value="Ribosomal_bL33"/>
    <property type="match status" value="1"/>
</dbReference>
<dbReference type="InterPro" id="IPR001705">
    <property type="entry name" value="Ribosomal_bL33"/>
</dbReference>
<dbReference type="InterPro" id="IPR038584">
    <property type="entry name" value="Ribosomal_bL33_sf"/>
</dbReference>
<dbReference type="InterPro" id="IPR011332">
    <property type="entry name" value="Ribosomal_zn-bd"/>
</dbReference>
<dbReference type="NCBIfam" id="NF001764">
    <property type="entry name" value="PRK00504.1"/>
    <property type="match status" value="1"/>
</dbReference>
<dbReference type="NCBIfam" id="TIGR01023">
    <property type="entry name" value="rpmG_bact"/>
    <property type="match status" value="1"/>
</dbReference>
<dbReference type="Pfam" id="PF00471">
    <property type="entry name" value="Ribosomal_L33"/>
    <property type="match status" value="1"/>
</dbReference>
<dbReference type="SUPFAM" id="SSF57829">
    <property type="entry name" value="Zn-binding ribosomal proteins"/>
    <property type="match status" value="1"/>
</dbReference>
<evidence type="ECO:0000255" key="1">
    <source>
        <dbReference type="HAMAP-Rule" id="MF_00294"/>
    </source>
</evidence>
<comment type="similarity">
    <text evidence="1">Belongs to the bacterial ribosomal protein bL33 family.</text>
</comment>
<organism>
    <name type="scientific">Listeria monocytogenes serotype 4b (strain F2365)</name>
    <dbReference type="NCBI Taxonomy" id="265669"/>
    <lineage>
        <taxon>Bacteria</taxon>
        <taxon>Bacillati</taxon>
        <taxon>Bacillota</taxon>
        <taxon>Bacilli</taxon>
        <taxon>Bacillales</taxon>
        <taxon>Listeriaceae</taxon>
        <taxon>Listeria</taxon>
    </lineage>
</organism>
<feature type="chain" id="PRO_0000170180" description="Large ribosomal subunit protein bL33B">
    <location>
        <begin position="1"/>
        <end position="49"/>
    </location>
</feature>
<gene>
    <name evidence="1" type="primary">rpmG2</name>
    <name type="ordered locus">LMOf2365_0256</name>
</gene>
<keyword id="KW-0687">Ribonucleoprotein</keyword>
<keyword id="KW-0689">Ribosomal protein</keyword>
<sequence>MKKKTSLACSECGSRNYTVNVSGTQKETRLEVKKFCRHCNKHTLHRETK</sequence>
<protein>
    <recommendedName>
        <fullName evidence="1">Large ribosomal subunit protein bL33B</fullName>
    </recommendedName>
    <alternativeName>
        <fullName evidence="1">50S ribosomal protein L33 2</fullName>
    </alternativeName>
</protein>
<accession>Q724G8</accession>
<proteinExistence type="inferred from homology"/>